<organism>
    <name type="scientific">Dichelobacter nodosus</name>
    <name type="common">Bacteroides nodosus</name>
    <dbReference type="NCBI Taxonomy" id="870"/>
    <lineage>
        <taxon>Bacteria</taxon>
        <taxon>Pseudomonadati</taxon>
        <taxon>Pseudomonadota</taxon>
        <taxon>Gammaproteobacteria</taxon>
        <taxon>Cardiobacteriales</taxon>
        <taxon>Cardiobacteriaceae</taxon>
        <taxon>Dichelobacter</taxon>
    </lineage>
</organism>
<evidence type="ECO:0000250" key="1">
    <source>
        <dbReference type="UniProtKB" id="A5EWR9"/>
    </source>
</evidence>
<evidence type="ECO:0000250" key="2">
    <source>
        <dbReference type="UniProtKB" id="P02975"/>
    </source>
</evidence>
<evidence type="ECO:0000255" key="3"/>
<evidence type="ECO:0000255" key="4">
    <source>
        <dbReference type="PROSITE-ProRule" id="PRU01070"/>
    </source>
</evidence>
<evidence type="ECO:0000305" key="5"/>
<feature type="propeptide" id="PRO_0000024117" description="Leader sequence" evidence="4">
    <location>
        <begin position="1"/>
        <end position="7"/>
    </location>
</feature>
<feature type="chain" id="PRO_0000024118" description="Type IV major fimbrial protein FimA">
    <location>
        <begin position="8"/>
        <end position="161"/>
    </location>
</feature>
<feature type="transmembrane region" description="Helical" evidence="3">
    <location>
        <begin position="8"/>
        <end position="28"/>
    </location>
</feature>
<feature type="modified residue" description="N-methylphenylalanine" evidence="4">
    <location>
        <position position="8"/>
    </location>
</feature>
<feature type="disulfide bond" evidence="2">
    <location>
        <begin position="63"/>
        <end position="105"/>
    </location>
</feature>
<comment type="function">
    <text evidence="1">Major component of the type IV fimbriae that plays an essential role in twitching motility, natural transformation, and protease secretion.</text>
</comment>
<comment type="subunit">
    <text>The pili are polar flexible filaments of about 5.4 nanometers diameter and 2.5 micrometers average length; they consist of only a single polypeptide chain arranged in a helical configuration of five subunits per turn in the assembled pilus.</text>
</comment>
<comment type="subcellular location">
    <subcellularLocation>
        <location evidence="1">Fimbrium</location>
    </subcellularLocation>
    <subcellularLocation>
        <location evidence="3">Membrane</location>
        <topology evidence="3">Single-pass membrane protein</topology>
    </subcellularLocation>
</comment>
<comment type="similarity">
    <text evidence="5">Belongs to the N-Me-Phe pilin family.</text>
</comment>
<dbReference type="EMBL" id="M37474">
    <property type="protein sequence ID" value="AAA23339.1"/>
    <property type="molecule type" value="Genomic_DNA"/>
</dbReference>
<dbReference type="PIR" id="PS0421">
    <property type="entry name" value="PS0421"/>
</dbReference>
<dbReference type="SMR" id="P27689"/>
<dbReference type="GO" id="GO:0016020">
    <property type="term" value="C:membrane"/>
    <property type="evidence" value="ECO:0007669"/>
    <property type="project" value="UniProtKB-SubCell"/>
</dbReference>
<dbReference type="GO" id="GO:0009289">
    <property type="term" value="C:pilus"/>
    <property type="evidence" value="ECO:0007669"/>
    <property type="project" value="UniProtKB-SubCell"/>
</dbReference>
<dbReference type="GO" id="GO:0007155">
    <property type="term" value="P:cell adhesion"/>
    <property type="evidence" value="ECO:0007669"/>
    <property type="project" value="InterPro"/>
</dbReference>
<dbReference type="Gene3D" id="3.30.700.10">
    <property type="entry name" value="Glycoprotein, Type 4 Pilin"/>
    <property type="match status" value="1"/>
</dbReference>
<dbReference type="InterPro" id="IPR012902">
    <property type="entry name" value="N_methyl_site"/>
</dbReference>
<dbReference type="InterPro" id="IPR001082">
    <property type="entry name" value="Pilin"/>
</dbReference>
<dbReference type="InterPro" id="IPR045584">
    <property type="entry name" value="Pilin-like"/>
</dbReference>
<dbReference type="NCBIfam" id="TIGR02532">
    <property type="entry name" value="IV_pilin_GFxxxE"/>
    <property type="match status" value="1"/>
</dbReference>
<dbReference type="Pfam" id="PF07963">
    <property type="entry name" value="N_methyl"/>
    <property type="match status" value="1"/>
</dbReference>
<dbReference type="Pfam" id="PF00114">
    <property type="entry name" value="Pilin"/>
    <property type="match status" value="1"/>
</dbReference>
<dbReference type="SUPFAM" id="SSF54523">
    <property type="entry name" value="Pili subunits"/>
    <property type="match status" value="1"/>
</dbReference>
<dbReference type="PROSITE" id="PS00409">
    <property type="entry name" value="PROKAR_NTER_METHYL"/>
    <property type="match status" value="1"/>
</dbReference>
<name>FMA3_DICNO</name>
<gene>
    <name type="primary">fimA</name>
</gene>
<reference key="1">
    <citation type="journal article" date="1991" name="Gene">
        <title>Sequence of fimbrial subunit-encoding genes from virulent and benign isolates of Dichelobacter (Bacteroides) nodosus.</title>
        <authorList>
            <person name="Billington S.J."/>
            <person name="Rood J.I."/>
        </authorList>
    </citation>
    <scope>NUCLEOTIDE SEQUENCE [GENOMIC DNA]</scope>
    <source>
        <strain>Serogroup B1 isolate AC293</strain>
    </source>
</reference>
<proteinExistence type="inferred from homology"/>
<accession>P27689</accession>
<protein>
    <recommendedName>
        <fullName>Type IV major fimbrial protein FimA</fullName>
    </recommendedName>
    <alternativeName>
        <fullName>Pilin</fullName>
    </alternativeName>
    <alternativeName>
        <fullName>Serogroup B1/AC293</fullName>
    </alternativeName>
</protein>
<sequence>MKSLQKGFTLIELMIVVAIIGILAAFAIPAYNDYIARSQAAEGVSLADGLKVRIAENLQDGECKGPDADPQSGVVGNEDKGKYGLAKIEGDYDASKTEAGDPNGCKVEITYGQGTAGDKISKLITGKKLVLDQLVNGSFVQGDGTDLADKFIPNAVKAKKP</sequence>
<keyword id="KW-1015">Disulfide bond</keyword>
<keyword id="KW-0281">Fimbrium</keyword>
<keyword id="KW-0472">Membrane</keyword>
<keyword id="KW-0488">Methylation</keyword>
<keyword id="KW-0812">Transmembrane</keyword>
<keyword id="KW-1133">Transmembrane helix</keyword>